<dbReference type="EMBL" id="U55001">
    <property type="protein sequence ID" value="AAB05439.1"/>
    <property type="status" value="ALT_INIT"/>
    <property type="molecule type" value="Genomic_DNA"/>
</dbReference>
<dbReference type="GO" id="GO:0043657">
    <property type="term" value="C:host cell"/>
    <property type="evidence" value="ECO:0007669"/>
    <property type="project" value="GOC"/>
</dbReference>
<dbReference type="GO" id="GO:0044196">
    <property type="term" value="C:host cell nucleolus"/>
    <property type="evidence" value="ECO:0007669"/>
    <property type="project" value="UniProtKB-SubCell"/>
</dbReference>
<dbReference type="GO" id="GO:0019028">
    <property type="term" value="C:viral capsid"/>
    <property type="evidence" value="ECO:0007669"/>
    <property type="project" value="InterPro"/>
</dbReference>
<dbReference type="GO" id="GO:0003677">
    <property type="term" value="F:DNA binding"/>
    <property type="evidence" value="ECO:0007669"/>
    <property type="project" value="UniProtKB-UniRule"/>
</dbReference>
<dbReference type="GO" id="GO:0046718">
    <property type="term" value="P:symbiont entry into host cell"/>
    <property type="evidence" value="ECO:0007669"/>
    <property type="project" value="UniProtKB-UniRule"/>
</dbReference>
<dbReference type="GO" id="GO:0075732">
    <property type="term" value="P:viral penetration into host nucleus"/>
    <property type="evidence" value="ECO:0007669"/>
    <property type="project" value="UniProtKB-UniRule"/>
</dbReference>
<dbReference type="HAMAP" id="MF_04056">
    <property type="entry name" value="ADV_PVII"/>
    <property type="match status" value="1"/>
</dbReference>
<dbReference type="InterPro" id="IPR004912">
    <property type="entry name" value="Adeno_VII"/>
</dbReference>
<dbReference type="Pfam" id="PF03228">
    <property type="entry name" value="Adeno_VII"/>
    <property type="match status" value="1"/>
</dbReference>
<accession>Q65951</accession>
<protein>
    <recommendedName>
        <fullName evidence="1">Pre-histone-like nucleoprotein</fullName>
    </recommendedName>
    <alternativeName>
        <fullName evidence="1">Pre-core protein VII</fullName>
        <shortName evidence="1">pVII</shortName>
    </alternativeName>
    <component>
        <recommendedName>
            <fullName evidence="1">Histone-like nucleoprotein</fullName>
            <shortName evidence="1">NP</shortName>
        </recommendedName>
        <alternativeName>
            <fullName evidence="1">Core protein VII</fullName>
        </alternativeName>
    </component>
</protein>
<gene>
    <name evidence="1" type="primary">L2</name>
</gene>
<keyword id="KW-0238">DNA-binding</keyword>
<keyword id="KW-1048">Host nucleus</keyword>
<keyword id="KW-0945">Host-virus interaction</keyword>
<keyword id="KW-0426">Late protein</keyword>
<keyword id="KW-0597">Phosphoprotein</keyword>
<keyword id="KW-1163">Viral penetration into host nucleus</keyword>
<keyword id="KW-0946">Virion</keyword>
<keyword id="KW-1160">Virus entry into host cell</keyword>
<comment type="function">
    <text evidence="1">Plays a role in the inhibition of host immune response within the nucleus. Interacts with cellular nucleosomes and immobilizes the host immune danger signal HMGB1 on chromatin. In turn, prevents HMGB1 release out of the cell and thus decreases inflammation. Also plays a role in the wrapping and condensation of the viral DNA. May also promote viral genome import into the nucleus.</text>
</comment>
<comment type="subunit">
    <text evidence="1">Interacts with the core-capsid bridging protein; this interaction bridges the virus core to the capsid. Interacts with host NPM1; this interaction might play a role in placing the pre-histone-like nucleoprotein on the viral DNA or regulating viral gene expression. Interacts with host HMGB1; this interaction inhibits host immune response.</text>
</comment>
<comment type="subcellular location">
    <molecule>Histone-like nucleoprotein</molecule>
    <subcellularLocation>
        <location evidence="1">Virion</location>
    </subcellularLocation>
    <text evidence="1">Located inside the capsid in association with the viral DNA (core). Present in about 1070 copies per virion.</text>
</comment>
<comment type="subcellular location">
    <molecule>Pre-histone-like nucleoprotein</molecule>
    <subcellularLocation>
        <location evidence="1">Host nucleus</location>
        <location evidence="1">Host nucleolus</location>
    </subcellularLocation>
</comment>
<comment type="induction">
    <text evidence="1">Expressed in the late phase of the viral replicative cycle.</text>
</comment>
<comment type="PTM">
    <text evidence="1">Cleaved near the N-terminus by the viral protease during virion maturation to form the mature protein.</text>
</comment>
<comment type="miscellaneous">
    <text evidence="1">All late proteins expressed from the major late promoter are produced by alternative splicing and alternative polyadenylation of the same gene giving rise to non-overlapping ORFs. A leader sequence is present in the N-terminus of all these mRNAs and is recognized by the viral shutoff protein to provide expression although conventional translation via ribosome scanning from the cap has been shut off in the host cell.</text>
</comment>
<comment type="similarity">
    <text evidence="1">Belongs to the adenoviridae histone-like nucleoprotein family.</text>
</comment>
<comment type="sequence caution" evidence="2">
    <conflict type="erroneous initiation">
        <sequence resource="EMBL-CDS" id="AAB05439"/>
    </conflict>
    <text>Extended N-terminus.</text>
</comment>
<evidence type="ECO:0000255" key="1">
    <source>
        <dbReference type="HAMAP-Rule" id="MF_04056"/>
    </source>
</evidence>
<evidence type="ECO:0000305" key="2"/>
<proteinExistence type="inferred from homology"/>
<sequence>MAILISPSNNTGWGLGTHKLFGGAKQKSDQHPVYVQAHYRAPWGGKGRRRPGRARGVPLDPKTEAEVVATIDEVARNGPPAARLVLEAARRVGAYNLRRARKLTPAGRAMAAMRARQMVNQAKRRKRRVRSK</sequence>
<organism>
    <name type="scientific">Canine adenovirus serotype 1 (strain CLL)</name>
    <name type="common">CAdV-1</name>
    <name type="synonym">Canine adenovirus 1 (strain CLL)</name>
    <dbReference type="NCBI Taxonomy" id="69150"/>
    <lineage>
        <taxon>Viruses</taxon>
        <taxon>Varidnaviria</taxon>
        <taxon>Bamfordvirae</taxon>
        <taxon>Preplasmiviricota</taxon>
        <taxon>Tectiliviricetes</taxon>
        <taxon>Rowavirales</taxon>
        <taxon>Adenoviridae</taxon>
        <taxon>Mastadenovirus</taxon>
        <taxon>Canine mastadenovirus A</taxon>
    </lineage>
</organism>
<feature type="initiator methionine" description="Removed" evidence="1">
    <location>
        <position position="1"/>
    </location>
</feature>
<feature type="chain" id="PRO_0000439837" description="Pre-histone-like nucleoprotein" evidence="1">
    <location>
        <begin position="2"/>
        <end position="132"/>
    </location>
</feature>
<feature type="propeptide" id="PRO_0000439838" evidence="1">
    <location>
        <begin position="2"/>
        <end position="23"/>
    </location>
</feature>
<feature type="chain" id="PRO_0000036586" description="Histone-like nucleoprotein" evidence="1">
    <location>
        <begin position="24"/>
        <end position="132"/>
    </location>
</feature>
<feature type="short sequence motif" description="Nuclear localization signal" evidence="1">
    <location>
        <begin position="124"/>
        <end position="132"/>
    </location>
</feature>
<feature type="site" description="Cleavage; by viral protease" evidence="1">
    <location>
        <begin position="23"/>
        <end position="24"/>
    </location>
</feature>
<reference key="1">
    <citation type="submission" date="1996-08" db="EMBL/GenBank/DDBJ databases">
        <title>DNA sequence and genomic organization of canine adenovirus type 1.</title>
        <authorList>
            <person name="Campbell J.B."/>
            <person name="Zhao Y."/>
        </authorList>
    </citation>
    <scope>NUCLEOTIDE SEQUENCE [LARGE SCALE GENOMIC DNA]</scope>
</reference>
<name>NP_ADECC</name>
<organismHost>
    <name type="scientific">Canis lupus familiaris</name>
    <name type="common">Dog</name>
    <name type="synonym">Canis familiaris</name>
    <dbReference type="NCBI Taxonomy" id="9615"/>
</organismHost>